<feature type="chain" id="PRO_1000068300" description="Peptide methionine sulfoxide reductase MsrB">
    <location>
        <begin position="1"/>
        <end position="137"/>
    </location>
</feature>
<feature type="domain" description="MsrB" evidence="2">
    <location>
        <begin position="7"/>
        <end position="129"/>
    </location>
</feature>
<feature type="active site" description="Nucleophile" evidence="2">
    <location>
        <position position="118"/>
    </location>
</feature>
<feature type="binding site" evidence="2">
    <location>
        <position position="46"/>
    </location>
    <ligand>
        <name>Zn(2+)</name>
        <dbReference type="ChEBI" id="CHEBI:29105"/>
    </ligand>
</feature>
<feature type="binding site" evidence="2">
    <location>
        <position position="49"/>
    </location>
    <ligand>
        <name>Zn(2+)</name>
        <dbReference type="ChEBI" id="CHEBI:29105"/>
    </ligand>
</feature>
<feature type="binding site" evidence="2">
    <location>
        <position position="95"/>
    </location>
    <ligand>
        <name>Zn(2+)</name>
        <dbReference type="ChEBI" id="CHEBI:29105"/>
    </ligand>
</feature>
<feature type="binding site" evidence="2">
    <location>
        <position position="98"/>
    </location>
    <ligand>
        <name>Zn(2+)</name>
        <dbReference type="ChEBI" id="CHEBI:29105"/>
    </ligand>
</feature>
<evidence type="ECO:0000255" key="1">
    <source>
        <dbReference type="HAMAP-Rule" id="MF_01400"/>
    </source>
</evidence>
<evidence type="ECO:0000255" key="2">
    <source>
        <dbReference type="PROSITE-ProRule" id="PRU01126"/>
    </source>
</evidence>
<sequence length="137" mass="15524">MAKELNPTENIEKLTDIQRHVTQLRGTEAPFSGKLLHNKREGVYQCLCCHQPLFISESKFDSGCGWPSFYQPLDAESIRYIDDYSHNMHRVEIRCGHCDAHLGHVFSDGPQPTGERYCVNSASLNFVDDQNGEQIPG</sequence>
<accession>A1JQG8</accession>
<organism>
    <name type="scientific">Yersinia enterocolitica serotype O:8 / biotype 1B (strain NCTC 13174 / 8081)</name>
    <dbReference type="NCBI Taxonomy" id="393305"/>
    <lineage>
        <taxon>Bacteria</taxon>
        <taxon>Pseudomonadati</taxon>
        <taxon>Pseudomonadota</taxon>
        <taxon>Gammaproteobacteria</taxon>
        <taxon>Enterobacterales</taxon>
        <taxon>Yersiniaceae</taxon>
        <taxon>Yersinia</taxon>
    </lineage>
</organism>
<keyword id="KW-0479">Metal-binding</keyword>
<keyword id="KW-0560">Oxidoreductase</keyword>
<keyword id="KW-0862">Zinc</keyword>
<proteinExistence type="inferred from homology"/>
<name>MSRB_YERE8</name>
<reference key="1">
    <citation type="journal article" date="2006" name="PLoS Genet.">
        <title>The complete genome sequence and comparative genome analysis of the high pathogenicity Yersinia enterocolitica strain 8081.</title>
        <authorList>
            <person name="Thomson N.R."/>
            <person name="Howard S."/>
            <person name="Wren B.W."/>
            <person name="Holden M.T.G."/>
            <person name="Crossman L."/>
            <person name="Challis G.L."/>
            <person name="Churcher C."/>
            <person name="Mungall K."/>
            <person name="Brooks K."/>
            <person name="Chillingworth T."/>
            <person name="Feltwell T."/>
            <person name="Abdellah Z."/>
            <person name="Hauser H."/>
            <person name="Jagels K."/>
            <person name="Maddison M."/>
            <person name="Moule S."/>
            <person name="Sanders M."/>
            <person name="Whitehead S."/>
            <person name="Quail M.A."/>
            <person name="Dougan G."/>
            <person name="Parkhill J."/>
            <person name="Prentice M.B."/>
        </authorList>
    </citation>
    <scope>NUCLEOTIDE SEQUENCE [LARGE SCALE GENOMIC DNA]</scope>
    <source>
        <strain>NCTC 13174 / 8081</strain>
    </source>
</reference>
<comment type="catalytic activity">
    <reaction evidence="1">
        <text>L-methionyl-[protein] + [thioredoxin]-disulfide + H2O = L-methionyl-(R)-S-oxide-[protein] + [thioredoxin]-dithiol</text>
        <dbReference type="Rhea" id="RHEA:24164"/>
        <dbReference type="Rhea" id="RHEA-COMP:10698"/>
        <dbReference type="Rhea" id="RHEA-COMP:10700"/>
        <dbReference type="Rhea" id="RHEA-COMP:12313"/>
        <dbReference type="Rhea" id="RHEA-COMP:12314"/>
        <dbReference type="ChEBI" id="CHEBI:15377"/>
        <dbReference type="ChEBI" id="CHEBI:16044"/>
        <dbReference type="ChEBI" id="CHEBI:29950"/>
        <dbReference type="ChEBI" id="CHEBI:45764"/>
        <dbReference type="ChEBI" id="CHEBI:50058"/>
        <dbReference type="EC" id="1.8.4.12"/>
    </reaction>
</comment>
<comment type="cofactor">
    <cofactor evidence="1">
        <name>Zn(2+)</name>
        <dbReference type="ChEBI" id="CHEBI:29105"/>
    </cofactor>
    <text evidence="1">Binds 1 zinc ion per subunit. The zinc ion is important for the structural integrity of the protein.</text>
</comment>
<comment type="similarity">
    <text evidence="1">Belongs to the MsrB Met sulfoxide reductase family.</text>
</comment>
<protein>
    <recommendedName>
        <fullName evidence="1">Peptide methionine sulfoxide reductase MsrB</fullName>
        <ecNumber evidence="1">1.8.4.12</ecNumber>
    </recommendedName>
    <alternativeName>
        <fullName evidence="1">Peptide-methionine (R)-S-oxide reductase</fullName>
    </alternativeName>
</protein>
<gene>
    <name evidence="1" type="primary">msrB</name>
    <name type="ordered locus">YE2264</name>
</gene>
<dbReference type="EC" id="1.8.4.12" evidence="1"/>
<dbReference type="EMBL" id="AM286415">
    <property type="protein sequence ID" value="CAL12324.1"/>
    <property type="molecule type" value="Genomic_DNA"/>
</dbReference>
<dbReference type="RefSeq" id="WP_005162907.1">
    <property type="nucleotide sequence ID" value="NC_008800.1"/>
</dbReference>
<dbReference type="RefSeq" id="YP_001006492.1">
    <property type="nucleotide sequence ID" value="NC_008800.1"/>
</dbReference>
<dbReference type="SMR" id="A1JQG8"/>
<dbReference type="GeneID" id="31409211"/>
<dbReference type="KEGG" id="yen:YE2264"/>
<dbReference type="PATRIC" id="fig|393305.7.peg.2424"/>
<dbReference type="eggNOG" id="COG0229">
    <property type="taxonomic scope" value="Bacteria"/>
</dbReference>
<dbReference type="HOGENOM" id="CLU_031040_8_5_6"/>
<dbReference type="OrthoDB" id="9785497at2"/>
<dbReference type="Proteomes" id="UP000000642">
    <property type="component" value="Chromosome"/>
</dbReference>
<dbReference type="GO" id="GO:0005737">
    <property type="term" value="C:cytoplasm"/>
    <property type="evidence" value="ECO:0007669"/>
    <property type="project" value="TreeGrafter"/>
</dbReference>
<dbReference type="GO" id="GO:0033743">
    <property type="term" value="F:peptide-methionine (R)-S-oxide reductase activity"/>
    <property type="evidence" value="ECO:0007669"/>
    <property type="project" value="UniProtKB-UniRule"/>
</dbReference>
<dbReference type="GO" id="GO:0008270">
    <property type="term" value="F:zinc ion binding"/>
    <property type="evidence" value="ECO:0007669"/>
    <property type="project" value="UniProtKB-UniRule"/>
</dbReference>
<dbReference type="GO" id="GO:0030091">
    <property type="term" value="P:protein repair"/>
    <property type="evidence" value="ECO:0007669"/>
    <property type="project" value="InterPro"/>
</dbReference>
<dbReference type="GO" id="GO:0006979">
    <property type="term" value="P:response to oxidative stress"/>
    <property type="evidence" value="ECO:0007669"/>
    <property type="project" value="InterPro"/>
</dbReference>
<dbReference type="FunFam" id="2.170.150.20:FF:000001">
    <property type="entry name" value="Peptide methionine sulfoxide reductase MsrB"/>
    <property type="match status" value="1"/>
</dbReference>
<dbReference type="Gene3D" id="2.170.150.20">
    <property type="entry name" value="Peptide methionine sulfoxide reductase"/>
    <property type="match status" value="1"/>
</dbReference>
<dbReference type="HAMAP" id="MF_01400">
    <property type="entry name" value="MsrB"/>
    <property type="match status" value="1"/>
</dbReference>
<dbReference type="InterPro" id="IPR028427">
    <property type="entry name" value="Met_Sox_Rdtase_MsrB"/>
</dbReference>
<dbReference type="InterPro" id="IPR002579">
    <property type="entry name" value="Met_Sox_Rdtase_MsrB_dom"/>
</dbReference>
<dbReference type="InterPro" id="IPR011057">
    <property type="entry name" value="Mss4-like_sf"/>
</dbReference>
<dbReference type="NCBIfam" id="TIGR00357">
    <property type="entry name" value="peptide-methionine (R)-S-oxide reductase MsrB"/>
    <property type="match status" value="1"/>
</dbReference>
<dbReference type="PANTHER" id="PTHR10173">
    <property type="entry name" value="METHIONINE SULFOXIDE REDUCTASE"/>
    <property type="match status" value="1"/>
</dbReference>
<dbReference type="PANTHER" id="PTHR10173:SF52">
    <property type="entry name" value="METHIONINE-R-SULFOXIDE REDUCTASE B1"/>
    <property type="match status" value="1"/>
</dbReference>
<dbReference type="Pfam" id="PF01641">
    <property type="entry name" value="SelR"/>
    <property type="match status" value="1"/>
</dbReference>
<dbReference type="SUPFAM" id="SSF51316">
    <property type="entry name" value="Mss4-like"/>
    <property type="match status" value="1"/>
</dbReference>
<dbReference type="PROSITE" id="PS51790">
    <property type="entry name" value="MSRB"/>
    <property type="match status" value="1"/>
</dbReference>